<dbReference type="EMBL" id="M97496">
    <property type="protein sequence ID" value="AAA35915.1"/>
    <property type="molecule type" value="mRNA"/>
</dbReference>
<dbReference type="EMBL" id="M95174">
    <property type="protein sequence ID" value="AAA58625.1"/>
    <property type="molecule type" value="mRNA"/>
</dbReference>
<dbReference type="EMBL" id="X74322">
    <property type="protein sequence ID" value="CAC22258.1"/>
    <property type="molecule type" value="Genomic_DNA"/>
</dbReference>
<dbReference type="EMBL" id="AC114492">
    <property type="status" value="NOT_ANNOTATED_CDS"/>
    <property type="molecule type" value="Genomic_DNA"/>
</dbReference>
<dbReference type="CCDS" id="CCDS465.1"/>
<dbReference type="PIR" id="A46279">
    <property type="entry name" value="A46279"/>
</dbReference>
<dbReference type="RefSeq" id="NP_291031.2">
    <property type="nucleotide sequence ID" value="NM_033553.2"/>
</dbReference>
<dbReference type="PDB" id="1GNA">
    <property type="method" value="NMR"/>
    <property type="chains" value="A=103-115"/>
</dbReference>
<dbReference type="PDB" id="1GNB">
    <property type="method" value="NMR"/>
    <property type="chains" value="A=103-115"/>
</dbReference>
<dbReference type="PDB" id="1O8R">
    <property type="method" value="NMR"/>
    <property type="chains" value="A=22-115"/>
</dbReference>
<dbReference type="PDBsum" id="1GNA"/>
<dbReference type="PDBsum" id="1GNB"/>
<dbReference type="PDBsum" id="1O8R"/>
<dbReference type="BMRB" id="Q02747"/>
<dbReference type="SMR" id="Q02747"/>
<dbReference type="BioGRID" id="109235">
    <property type="interactions" value="33"/>
</dbReference>
<dbReference type="FunCoup" id="Q02747">
    <property type="interactions" value="211"/>
</dbReference>
<dbReference type="IntAct" id="Q02747">
    <property type="interactions" value="13"/>
</dbReference>
<dbReference type="STRING" id="9606.ENSP00000349493"/>
<dbReference type="GlyGen" id="Q02747">
    <property type="glycosylation" value="1 site, 1 N-linked glycan (1 site)"/>
</dbReference>
<dbReference type="iPTMnet" id="Q02747"/>
<dbReference type="BioMuta" id="GUCA2A"/>
<dbReference type="DMDM" id="290457645"/>
<dbReference type="MassIVE" id="Q02747"/>
<dbReference type="PaxDb" id="9606-ENSP00000349493"/>
<dbReference type="PeptideAtlas" id="Q02747"/>
<dbReference type="ProteomicsDB" id="58118"/>
<dbReference type="Antibodypedia" id="2733">
    <property type="antibodies" value="176 antibodies from 21 providers"/>
</dbReference>
<dbReference type="DNASU" id="2980"/>
<dbReference type="Ensembl" id="ENST00000357001.3">
    <property type="protein sequence ID" value="ENSP00000349493.2"/>
    <property type="gene ID" value="ENSG00000197273.4"/>
</dbReference>
<dbReference type="GeneID" id="2980"/>
<dbReference type="KEGG" id="hsa:2980"/>
<dbReference type="MANE-Select" id="ENST00000357001.3">
    <property type="protein sequence ID" value="ENSP00000349493.2"/>
    <property type="RefSeq nucleotide sequence ID" value="NM_033553.3"/>
    <property type="RefSeq protein sequence ID" value="NP_291031.2"/>
</dbReference>
<dbReference type="UCSC" id="uc001chd.2">
    <property type="organism name" value="human"/>
</dbReference>
<dbReference type="AGR" id="HGNC:4682"/>
<dbReference type="CTD" id="2980"/>
<dbReference type="DisGeNET" id="2980"/>
<dbReference type="GeneCards" id="GUCA2A"/>
<dbReference type="HGNC" id="HGNC:4682">
    <property type="gene designation" value="GUCA2A"/>
</dbReference>
<dbReference type="HPA" id="ENSG00000197273">
    <property type="expression patterns" value="Tissue enriched (intestine)"/>
</dbReference>
<dbReference type="MIM" id="139392">
    <property type="type" value="gene"/>
</dbReference>
<dbReference type="neXtProt" id="NX_Q02747"/>
<dbReference type="OpenTargets" id="ENSG00000197273"/>
<dbReference type="PharmGKB" id="PA29065"/>
<dbReference type="VEuPathDB" id="HostDB:ENSG00000197273"/>
<dbReference type="eggNOG" id="ENOG502S7QR">
    <property type="taxonomic scope" value="Eukaryota"/>
</dbReference>
<dbReference type="GeneTree" id="ENSGT00940000154436"/>
<dbReference type="HOGENOM" id="CLU_166952_0_0_1"/>
<dbReference type="InParanoid" id="Q02747"/>
<dbReference type="OMA" id="CAEPMLP"/>
<dbReference type="OrthoDB" id="9926421at2759"/>
<dbReference type="PAN-GO" id="Q02747">
    <property type="GO annotations" value="1 GO annotation based on evolutionary models"/>
</dbReference>
<dbReference type="PhylomeDB" id="Q02747"/>
<dbReference type="TreeFam" id="TF330731"/>
<dbReference type="PathwayCommons" id="Q02747"/>
<dbReference type="Reactome" id="R-HSA-8935690">
    <property type="pathway name" value="Digestion"/>
</dbReference>
<dbReference type="SignaLink" id="Q02747"/>
<dbReference type="SIGNOR" id="Q02747"/>
<dbReference type="BioGRID-ORCS" id="2980">
    <property type="hits" value="41 hits in 1134 CRISPR screens"/>
</dbReference>
<dbReference type="EvolutionaryTrace" id="Q02747"/>
<dbReference type="GenomeRNAi" id="2980"/>
<dbReference type="Pharos" id="Q02747">
    <property type="development level" value="Tbio"/>
</dbReference>
<dbReference type="PRO" id="PR:Q02747"/>
<dbReference type="Proteomes" id="UP000005640">
    <property type="component" value="Chromosome 1"/>
</dbReference>
<dbReference type="RNAct" id="Q02747">
    <property type="molecule type" value="protein"/>
</dbReference>
<dbReference type="Bgee" id="ENSG00000197273">
    <property type="expression patterns" value="Expressed in ileal mucosa and 114 other cell types or tissues"/>
</dbReference>
<dbReference type="GO" id="GO:0005576">
    <property type="term" value="C:extracellular region"/>
    <property type="evidence" value="ECO:0000304"/>
    <property type="project" value="Reactome"/>
</dbReference>
<dbReference type="GO" id="GO:0030250">
    <property type="term" value="F:guanylate cyclase activator activity"/>
    <property type="evidence" value="ECO:0000318"/>
    <property type="project" value="GO_Central"/>
</dbReference>
<dbReference type="GO" id="GO:0005179">
    <property type="term" value="F:hormone activity"/>
    <property type="evidence" value="ECO:0000303"/>
    <property type="project" value="UniProtKB"/>
</dbReference>
<dbReference type="FunFam" id="3.90.1450.10:FF:000002">
    <property type="entry name" value="Guanylate cyclase activator 2A"/>
    <property type="match status" value="1"/>
</dbReference>
<dbReference type="Gene3D" id="3.90.1450.10">
    <property type="entry name" value="Guanylin"/>
    <property type="match status" value="1"/>
</dbReference>
<dbReference type="InterPro" id="IPR000879">
    <property type="entry name" value="Guanylin"/>
</dbReference>
<dbReference type="InterPro" id="IPR036382">
    <property type="entry name" value="Guanylin_sf"/>
</dbReference>
<dbReference type="PANTHER" id="PTHR11318:SF3">
    <property type="entry name" value="GUANYLIN"/>
    <property type="match status" value="1"/>
</dbReference>
<dbReference type="PANTHER" id="PTHR11318">
    <property type="entry name" value="GUANYLIN FAMILY MEMBER"/>
    <property type="match status" value="1"/>
</dbReference>
<dbReference type="Pfam" id="PF02058">
    <property type="entry name" value="Guanylin"/>
    <property type="match status" value="1"/>
</dbReference>
<dbReference type="PIRSF" id="PIRSF001849">
    <property type="entry name" value="Guanylin"/>
    <property type="match status" value="1"/>
</dbReference>
<dbReference type="PRINTS" id="PR00774">
    <property type="entry name" value="GUANYLIN"/>
</dbReference>
<dbReference type="SUPFAM" id="SSF89890">
    <property type="entry name" value="Proguanylin"/>
    <property type="match status" value="1"/>
</dbReference>
<proteinExistence type="evidence at protein level"/>
<protein>
    <recommendedName>
        <fullName>Guanylin</fullName>
    </recommendedName>
    <alternativeName>
        <fullName>Guanylate cyclase activator 2A</fullName>
    </alternativeName>
    <alternativeName>
        <fullName>Guanylate cyclase-activating protein 1</fullName>
    </alternativeName>
    <alternativeName>
        <fullName>Guanylate cyclase-activating protein I</fullName>
        <shortName>GCAP-I</shortName>
    </alternativeName>
    <component>
        <recommendedName>
            <fullName>HMW-guanylin</fullName>
        </recommendedName>
    </component>
    <component>
        <recommendedName>
            <fullName>Guanylin</fullName>
        </recommendedName>
    </component>
</protein>
<accession>Q02747</accession>
<organism>
    <name type="scientific">Homo sapiens</name>
    <name type="common">Human</name>
    <dbReference type="NCBI Taxonomy" id="9606"/>
    <lineage>
        <taxon>Eukaryota</taxon>
        <taxon>Metazoa</taxon>
        <taxon>Chordata</taxon>
        <taxon>Craniata</taxon>
        <taxon>Vertebrata</taxon>
        <taxon>Euteleostomi</taxon>
        <taxon>Mammalia</taxon>
        <taxon>Eutheria</taxon>
        <taxon>Euarchontoglires</taxon>
        <taxon>Primates</taxon>
        <taxon>Haplorrhini</taxon>
        <taxon>Catarrhini</taxon>
        <taxon>Hominidae</taxon>
        <taxon>Homo</taxon>
    </lineage>
</organism>
<evidence type="ECO:0000269" key="1">
    <source>
    </source>
</evidence>
<evidence type="ECO:0000269" key="2">
    <source>
    </source>
</evidence>
<evidence type="ECO:0000269" key="3">
    <source>
    </source>
</evidence>
<evidence type="ECO:0000269" key="4">
    <source>
    </source>
</evidence>
<evidence type="ECO:0000269" key="5">
    <source>
    </source>
</evidence>
<evidence type="ECO:0000305" key="6"/>
<evidence type="ECO:0007829" key="7">
    <source>
        <dbReference type="PDB" id="1GNA"/>
    </source>
</evidence>
<evidence type="ECO:0007829" key="8">
    <source>
        <dbReference type="PDB" id="1O8R"/>
    </source>
</evidence>
<gene>
    <name type="primary">GUCA2A</name>
    <name type="synonym">GUCA2</name>
</gene>
<feature type="signal peptide" evidence="5">
    <location>
        <begin position="1"/>
        <end position="21"/>
    </location>
</feature>
<feature type="chain" id="PRO_0000013135" description="HMW-guanylin">
    <location>
        <begin position="22"/>
        <end position="115"/>
    </location>
</feature>
<feature type="peptide" id="PRO_0000013136" description="Guanylin">
    <location>
        <begin position="101"/>
        <end position="115"/>
    </location>
</feature>
<feature type="disulfide bond" evidence="1">
    <location>
        <begin position="69"/>
        <end position="82"/>
    </location>
</feature>
<feature type="disulfide bond" evidence="1">
    <location>
        <begin position="104"/>
        <end position="112"/>
    </location>
</feature>
<feature type="disulfide bond" evidence="1">
    <location>
        <begin position="107"/>
        <end position="115"/>
    </location>
</feature>
<feature type="sequence variant" id="VAR_062678" description="In dbSNP:rs2071499." evidence="2 3 4">
    <original>S</original>
    <variation>F</variation>
    <location>
        <position position="7"/>
    </location>
</feature>
<feature type="strand" evidence="8">
    <location>
        <begin position="23"/>
        <end position="31"/>
    </location>
</feature>
<feature type="helix" evidence="8">
    <location>
        <begin position="34"/>
        <end position="37"/>
    </location>
</feature>
<feature type="turn" evidence="8">
    <location>
        <begin position="38"/>
        <end position="41"/>
    </location>
</feature>
<feature type="helix" evidence="8">
    <location>
        <begin position="76"/>
        <end position="78"/>
    </location>
</feature>
<feature type="helix" evidence="8">
    <location>
        <begin position="79"/>
        <end position="82"/>
    </location>
</feature>
<feature type="helix" evidence="8">
    <location>
        <begin position="87"/>
        <end position="98"/>
    </location>
</feature>
<feature type="turn" evidence="7">
    <location>
        <begin position="104"/>
        <end position="107"/>
    </location>
</feature>
<sequence>MNAFLLSALCLLGAWAALAGGVTVQDGNFSFSLESVKKLKDLQEPQEPRVGKLRNFAPIPGEPVVPILCSNPNFPEELKPLCKEPNAQEILQRLEEIAEDPGTCEICAYAACTGC</sequence>
<name>GUC2A_HUMAN</name>
<comment type="function">
    <text>Endogenous activator of intestinal guanylate cyclase. It stimulates this enzyme through the same receptor binding region as the heat-stable enterotoxins.</text>
</comment>
<comment type="interaction">
    <interactant intactId="EBI-12244272">
        <id>Q02747</id>
    </interactant>
    <interactant intactId="EBI-12092171">
        <id>Q12797-6</id>
        <label>ASPH</label>
    </interactant>
    <organismsDiffer>false</organismsDiffer>
    <experiments>3</experiments>
</comment>
<comment type="interaction">
    <interactant intactId="EBI-12244272">
        <id>Q02747</id>
    </interactant>
    <interactant intactId="EBI-2833872">
        <id>O15552</id>
        <label>FFAR2</label>
    </interactant>
    <organismsDiffer>false</organismsDiffer>
    <experiments>3</experiments>
</comment>
<comment type="interaction">
    <interactant intactId="EBI-12244272">
        <id>Q02747</id>
    </interactant>
    <interactant intactId="EBI-17458373">
        <id>P48165</id>
        <label>GJA8</label>
    </interactant>
    <organismsDiffer>false</organismsDiffer>
    <experiments>3</experiments>
</comment>
<comment type="interaction">
    <interactant intactId="EBI-12244272">
        <id>Q02747</id>
    </interactant>
    <interactant intactId="EBI-712073">
        <id>Q8NBJ4</id>
        <label>GOLM1</label>
    </interactant>
    <organismsDiffer>false</organismsDiffer>
    <experiments>3</experiments>
</comment>
<comment type="interaction">
    <interactant intactId="EBI-12244272">
        <id>Q02747</id>
    </interactant>
    <interactant intactId="EBI-10969203">
        <id>O14524-2</id>
        <label>NEMP1</label>
    </interactant>
    <organismsDiffer>false</organismsDiffer>
    <experiments>3</experiments>
</comment>
<comment type="interaction">
    <interactant intactId="EBI-12244272">
        <id>Q02747</id>
    </interactant>
    <interactant intactId="EBI-347996">
        <id>O43765</id>
        <label>SGTA</label>
    </interactant>
    <organismsDiffer>false</organismsDiffer>
    <experiments>8</experiments>
</comment>
<comment type="interaction">
    <interactant intactId="EBI-12244272">
        <id>Q02747</id>
    </interactant>
    <interactant intactId="EBI-12811757">
        <id>O95436-2</id>
        <label>SLC34A2</label>
    </interactant>
    <organismsDiffer>false</organismsDiffer>
    <experiments>3</experiments>
</comment>
<comment type="interaction">
    <interactant intactId="EBI-12244272">
        <id>Q02747</id>
    </interactant>
    <interactant intactId="EBI-11724423">
        <id>Q7Z7N9</id>
        <label>TMEM179B</label>
    </interactant>
    <organismsDiffer>false</organismsDiffer>
    <experiments>3</experiments>
</comment>
<comment type="interaction">
    <interactant intactId="EBI-12244272">
        <id>Q02747</id>
    </interactant>
    <interactant intactId="EBI-10982110">
        <id>Q96Q45-2</id>
        <label>TMEM237</label>
    </interactant>
    <organismsDiffer>false</organismsDiffer>
    <experiments>3</experiments>
</comment>
<comment type="interaction">
    <interactant intactId="EBI-12244272">
        <id>Q02747</id>
    </interactant>
    <interactant intactId="EBI-2548832">
        <id>Q8N661</id>
        <label>TMEM86B</label>
    </interactant>
    <organismsDiffer>false</organismsDiffer>
    <experiments>3</experiments>
</comment>
<comment type="interaction">
    <interactant intactId="EBI-12244272">
        <id>Q02747</id>
    </interactant>
    <interactant intactId="EBI-1788852">
        <id>Q15629</id>
        <label>TRAM1</label>
    </interactant>
    <organismsDiffer>false</organismsDiffer>
    <experiments>3</experiments>
</comment>
<comment type="interaction">
    <interactant intactId="EBI-12244272">
        <id>Q02747</id>
    </interactant>
    <interactant intactId="EBI-741480">
        <id>Q9UMX0</id>
        <label>UBQLN1</label>
    </interactant>
    <organismsDiffer>false</organismsDiffer>
    <experiments>3</experiments>
</comment>
<comment type="interaction">
    <interactant intactId="EBI-12244272">
        <id>Q02747</id>
    </interactant>
    <interactant intactId="EBI-947187">
        <id>Q9UHD9</id>
        <label>UBQLN2</label>
    </interactant>
    <organismsDiffer>false</organismsDiffer>
    <experiments>3</experiments>
</comment>
<comment type="subcellular location">
    <subcellularLocation>
        <location>Secreted</location>
    </subcellularLocation>
</comment>
<comment type="tissue specificity">
    <text>Highly expressed in ileum and colon. Found in plasma.</text>
</comment>
<comment type="similarity">
    <text evidence="6">Belongs to the guanylin family.</text>
</comment>
<keyword id="KW-0002">3D-structure</keyword>
<keyword id="KW-0903">Direct protein sequencing</keyword>
<keyword id="KW-1015">Disulfide bond</keyword>
<keyword id="KW-1267">Proteomics identification</keyword>
<keyword id="KW-1185">Reference proteome</keyword>
<keyword id="KW-0964">Secreted</keyword>
<keyword id="KW-0732">Signal</keyword>
<reference key="1">
    <citation type="journal article" date="1992" name="FEBS Lett.">
        <title>Human guanylin: cDNA isolation, structure, and activity.</title>
        <authorList>
            <person name="Wiegand R.C."/>
            <person name="Kato J."/>
            <person name="Huang M.D."/>
            <person name="Fok K.F."/>
            <person name="Kachur J.F."/>
            <person name="Currie M.G."/>
        </authorList>
    </citation>
    <scope>NUCLEOTIDE SEQUENCE [MRNA]</scope>
    <scope>VARIANT PHE-7</scope>
    <source>
        <tissue>Duodenum</tissue>
    </source>
</reference>
<reference key="2">
    <citation type="journal article" date="1992" name="Proc. Natl. Acad. Sci. U.S.A.">
        <title>Precursor structure, expression, and tissue distribution of human guanylin.</title>
        <authorList>
            <person name="de Sauvage F.J."/>
            <person name="Keshav S."/>
            <person name="Kuang W.J."/>
            <person name="Gillett N."/>
            <person name="Henzel W."/>
            <person name="Goeddel D.V."/>
        </authorList>
    </citation>
    <scope>NUCLEOTIDE SEQUENCE [MRNA]</scope>
    <scope>VARIANT PHE-7</scope>
    <source>
        <tissue>Ileum</tissue>
    </source>
</reference>
<reference key="3">
    <citation type="journal article" date="1995" name="Proc. Natl. Acad. Sci. U.S.A.">
        <title>Analysis of the human guanylin gene and the processing and cellular localization of the peptide.</title>
        <authorList>
            <person name="Hill O."/>
            <person name="Kuhn M."/>
            <person name="Zucht H.-D."/>
            <person name="Cetin Y."/>
            <person name="Kulaksiz H."/>
            <person name="Adermann K."/>
            <person name="Klock G."/>
            <person name="Rechkemmer G."/>
            <person name="Forssmann W.-G."/>
            <person name="Maegert H.-J."/>
        </authorList>
    </citation>
    <scope>NUCLEOTIDE SEQUENCE [GENOMIC DNA]</scope>
    <scope>VARIANT PHE-7</scope>
    <source>
        <tissue>Placenta</tissue>
    </source>
</reference>
<reference key="4">
    <citation type="journal article" date="2006" name="Nature">
        <title>The DNA sequence and biological annotation of human chromosome 1.</title>
        <authorList>
            <person name="Gregory S.G."/>
            <person name="Barlow K.F."/>
            <person name="McLay K.E."/>
            <person name="Kaul R."/>
            <person name="Swarbreck D."/>
            <person name="Dunham A."/>
            <person name="Scott C.E."/>
            <person name="Howe K.L."/>
            <person name="Woodfine K."/>
            <person name="Spencer C.C.A."/>
            <person name="Jones M.C."/>
            <person name="Gillson C."/>
            <person name="Searle S."/>
            <person name="Zhou Y."/>
            <person name="Kokocinski F."/>
            <person name="McDonald L."/>
            <person name="Evans R."/>
            <person name="Phillips K."/>
            <person name="Atkinson A."/>
            <person name="Cooper R."/>
            <person name="Jones C."/>
            <person name="Hall R.E."/>
            <person name="Andrews T.D."/>
            <person name="Lloyd C."/>
            <person name="Ainscough R."/>
            <person name="Almeida J.P."/>
            <person name="Ambrose K.D."/>
            <person name="Anderson F."/>
            <person name="Andrew R.W."/>
            <person name="Ashwell R.I.S."/>
            <person name="Aubin K."/>
            <person name="Babbage A.K."/>
            <person name="Bagguley C.L."/>
            <person name="Bailey J."/>
            <person name="Beasley H."/>
            <person name="Bethel G."/>
            <person name="Bird C.P."/>
            <person name="Bray-Allen S."/>
            <person name="Brown J.Y."/>
            <person name="Brown A.J."/>
            <person name="Buckley D."/>
            <person name="Burton J."/>
            <person name="Bye J."/>
            <person name="Carder C."/>
            <person name="Chapman J.C."/>
            <person name="Clark S.Y."/>
            <person name="Clarke G."/>
            <person name="Clee C."/>
            <person name="Cobley V."/>
            <person name="Collier R.E."/>
            <person name="Corby N."/>
            <person name="Coville G.J."/>
            <person name="Davies J."/>
            <person name="Deadman R."/>
            <person name="Dunn M."/>
            <person name="Earthrowl M."/>
            <person name="Ellington A.G."/>
            <person name="Errington H."/>
            <person name="Frankish A."/>
            <person name="Frankland J."/>
            <person name="French L."/>
            <person name="Garner P."/>
            <person name="Garnett J."/>
            <person name="Gay L."/>
            <person name="Ghori M.R.J."/>
            <person name="Gibson R."/>
            <person name="Gilby L.M."/>
            <person name="Gillett W."/>
            <person name="Glithero R.J."/>
            <person name="Grafham D.V."/>
            <person name="Griffiths C."/>
            <person name="Griffiths-Jones S."/>
            <person name="Grocock R."/>
            <person name="Hammond S."/>
            <person name="Harrison E.S.I."/>
            <person name="Hart E."/>
            <person name="Haugen E."/>
            <person name="Heath P.D."/>
            <person name="Holmes S."/>
            <person name="Holt K."/>
            <person name="Howden P.J."/>
            <person name="Hunt A.R."/>
            <person name="Hunt S.E."/>
            <person name="Hunter G."/>
            <person name="Isherwood J."/>
            <person name="James R."/>
            <person name="Johnson C."/>
            <person name="Johnson D."/>
            <person name="Joy A."/>
            <person name="Kay M."/>
            <person name="Kershaw J.K."/>
            <person name="Kibukawa M."/>
            <person name="Kimberley A.M."/>
            <person name="King A."/>
            <person name="Knights A.J."/>
            <person name="Lad H."/>
            <person name="Laird G."/>
            <person name="Lawlor S."/>
            <person name="Leongamornlert D.A."/>
            <person name="Lloyd D.M."/>
            <person name="Loveland J."/>
            <person name="Lovell J."/>
            <person name="Lush M.J."/>
            <person name="Lyne R."/>
            <person name="Martin S."/>
            <person name="Mashreghi-Mohammadi M."/>
            <person name="Matthews L."/>
            <person name="Matthews N.S.W."/>
            <person name="McLaren S."/>
            <person name="Milne S."/>
            <person name="Mistry S."/>
            <person name="Moore M.J.F."/>
            <person name="Nickerson T."/>
            <person name="O'Dell C.N."/>
            <person name="Oliver K."/>
            <person name="Palmeiri A."/>
            <person name="Palmer S.A."/>
            <person name="Parker A."/>
            <person name="Patel D."/>
            <person name="Pearce A.V."/>
            <person name="Peck A.I."/>
            <person name="Pelan S."/>
            <person name="Phelps K."/>
            <person name="Phillimore B.J."/>
            <person name="Plumb R."/>
            <person name="Rajan J."/>
            <person name="Raymond C."/>
            <person name="Rouse G."/>
            <person name="Saenphimmachak C."/>
            <person name="Sehra H.K."/>
            <person name="Sheridan E."/>
            <person name="Shownkeen R."/>
            <person name="Sims S."/>
            <person name="Skuce C.D."/>
            <person name="Smith M."/>
            <person name="Steward C."/>
            <person name="Subramanian S."/>
            <person name="Sycamore N."/>
            <person name="Tracey A."/>
            <person name="Tromans A."/>
            <person name="Van Helmond Z."/>
            <person name="Wall M."/>
            <person name="Wallis J.M."/>
            <person name="White S."/>
            <person name="Whitehead S.L."/>
            <person name="Wilkinson J.E."/>
            <person name="Willey D.L."/>
            <person name="Williams H."/>
            <person name="Wilming L."/>
            <person name="Wray P.W."/>
            <person name="Wu Z."/>
            <person name="Coulson A."/>
            <person name="Vaudin M."/>
            <person name="Sulston J.E."/>
            <person name="Durbin R.M."/>
            <person name="Hubbard T."/>
            <person name="Wooster R."/>
            <person name="Dunham I."/>
            <person name="Carter N.P."/>
            <person name="McVean G."/>
            <person name="Ross M.T."/>
            <person name="Harrow J."/>
            <person name="Olson M.V."/>
            <person name="Beck S."/>
            <person name="Rogers J."/>
            <person name="Bentley D.R."/>
        </authorList>
    </citation>
    <scope>NUCLEOTIDE SEQUENCE [LARGE SCALE GENOMIC DNA]</scope>
</reference>
<reference key="5">
    <citation type="journal article" date="1993" name="FEBS Lett.">
        <title>The circulating bioactive form of human guanylin is a high molecular weight peptide (10.3 kDa).</title>
        <authorList>
            <person name="Kuhn M."/>
            <person name="Raida M."/>
            <person name="Adermann K."/>
            <person name="Schulz-Knappe P."/>
            <person name="Gerzer R."/>
            <person name="Heim J.-M."/>
            <person name="Forssmann W.-G."/>
        </authorList>
    </citation>
    <scope>PROTEIN SEQUENCE OF 22-68</scope>
</reference>
<reference key="6">
    <citation type="journal article" date="1994" name="Biochemistry">
        <title>Determination of the solution structure of the peptide hormone guanylin: observation of a novel form of topological stereoisomerism.</title>
        <authorList>
            <person name="Skelton N.J."/>
            <person name="Garcia K.C."/>
            <person name="Goeddel D.V."/>
            <person name="Quan C."/>
            <person name="Burnier J.P."/>
        </authorList>
    </citation>
    <scope>STRUCTURE BY NMR OF 101-115</scope>
</reference>
<reference key="7">
    <citation type="journal article" date="2003" name="J. Biol. Chem.">
        <title>Solution structure of human proguanylin: the role of a hormone prosequence.</title>
        <authorList>
            <person name="Lauber T."/>
            <person name="Neudecker P."/>
            <person name="Rosch P."/>
            <person name="Marx U.C."/>
        </authorList>
    </citation>
    <scope>STRUCTURE BY NMR OF 22-115</scope>
    <scope>DISULFIDE BONDS</scope>
</reference>